<reference key="1">
    <citation type="journal article" date="1998" name="Nature">
        <title>Deciphering the biology of Mycobacterium tuberculosis from the complete genome sequence.</title>
        <authorList>
            <person name="Cole S.T."/>
            <person name="Brosch R."/>
            <person name="Parkhill J."/>
            <person name="Garnier T."/>
            <person name="Churcher C.M."/>
            <person name="Harris D.E."/>
            <person name="Gordon S.V."/>
            <person name="Eiglmeier K."/>
            <person name="Gas S."/>
            <person name="Barry C.E. III"/>
            <person name="Tekaia F."/>
            <person name="Badcock K."/>
            <person name="Basham D."/>
            <person name="Brown D."/>
            <person name="Chillingworth T."/>
            <person name="Connor R."/>
            <person name="Davies R.M."/>
            <person name="Devlin K."/>
            <person name="Feltwell T."/>
            <person name="Gentles S."/>
            <person name="Hamlin N."/>
            <person name="Holroyd S."/>
            <person name="Hornsby T."/>
            <person name="Jagels K."/>
            <person name="Krogh A."/>
            <person name="McLean J."/>
            <person name="Moule S."/>
            <person name="Murphy L.D."/>
            <person name="Oliver S."/>
            <person name="Osborne J."/>
            <person name="Quail M.A."/>
            <person name="Rajandream M.A."/>
            <person name="Rogers J."/>
            <person name="Rutter S."/>
            <person name="Seeger K."/>
            <person name="Skelton S."/>
            <person name="Squares S."/>
            <person name="Squares R."/>
            <person name="Sulston J.E."/>
            <person name="Taylor K."/>
            <person name="Whitehead S."/>
            <person name="Barrell B.G."/>
        </authorList>
    </citation>
    <scope>NUCLEOTIDE SEQUENCE [LARGE SCALE GENOMIC DNA]</scope>
    <source>
        <strain>ATCC 25618 / H37Rv</strain>
    </source>
</reference>
<reference key="2">
    <citation type="journal article" date="2011" name="Mol. Cell. Proteomics">
        <title>Proteogenomic analysis of Mycobacterium tuberculosis by high resolution mass spectrometry.</title>
        <authorList>
            <person name="Kelkar D.S."/>
            <person name="Kumar D."/>
            <person name="Kumar P."/>
            <person name="Balakrishnan L."/>
            <person name="Muthusamy B."/>
            <person name="Yadav A.K."/>
            <person name="Shrivastava P."/>
            <person name="Marimuthu A."/>
            <person name="Anand S."/>
            <person name="Sundaram H."/>
            <person name="Kingsbury R."/>
            <person name="Harsha H.C."/>
            <person name="Nair B."/>
            <person name="Prasad T.S."/>
            <person name="Chauhan D.S."/>
            <person name="Katoch K."/>
            <person name="Katoch V.M."/>
            <person name="Kumar P."/>
            <person name="Chaerkady R."/>
            <person name="Ramachandran S."/>
            <person name="Dash D."/>
            <person name="Pandey A."/>
        </authorList>
    </citation>
    <scope>IDENTIFICATION BY MASS SPECTROMETRY [LARGE SCALE ANALYSIS]</scope>
    <source>
        <strain>ATCC 25618 / H37Rv</strain>
    </source>
</reference>
<feature type="signal peptide" evidence="1">
    <location>
        <begin position="1"/>
        <end position="30"/>
    </location>
</feature>
<feature type="chain" id="PRO_0000014137" description="Uncharacterized lipoprotein Rv2585c">
    <location>
        <begin position="31"/>
        <end position="557"/>
    </location>
</feature>
<feature type="lipid moiety-binding region" description="N-palmitoyl cysteine" evidence="2">
    <location>
        <position position="31"/>
    </location>
</feature>
<feature type="lipid moiety-binding region" description="S-diacylglycerol cysteine" evidence="2">
    <location>
        <position position="31"/>
    </location>
</feature>
<gene>
    <name type="ordered locus">Rv2585c</name>
    <name type="ORF">MTCY227.16</name>
</gene>
<comment type="subcellular location">
    <subcellularLocation>
        <location evidence="2">Cell membrane</location>
        <topology evidence="2">Lipid-anchor</topology>
    </subcellularLocation>
</comment>
<comment type="similarity">
    <text evidence="2">To M.bovis Mb2616c and M.leprae ML0489.</text>
</comment>
<keyword id="KW-1003">Cell membrane</keyword>
<keyword id="KW-0449">Lipoprotein</keyword>
<keyword id="KW-0472">Membrane</keyword>
<keyword id="KW-0564">Palmitate</keyword>
<keyword id="KW-1185">Reference proteome</keyword>
<keyword id="KW-0732">Signal</keyword>
<proteinExistence type="evidence at protein level"/>
<dbReference type="EMBL" id="AL123456">
    <property type="protein sequence ID" value="CCP45381.1"/>
    <property type="molecule type" value="Genomic_DNA"/>
</dbReference>
<dbReference type="PIR" id="H70725">
    <property type="entry name" value="H70725"/>
</dbReference>
<dbReference type="RefSeq" id="NP_217101.1">
    <property type="nucleotide sequence ID" value="NC_000962.3"/>
</dbReference>
<dbReference type="RefSeq" id="WP_003917021.1">
    <property type="nucleotide sequence ID" value="NZ_NVQJ01000023.1"/>
</dbReference>
<dbReference type="SMR" id="P9WL77"/>
<dbReference type="FunCoup" id="P9WL77">
    <property type="interactions" value="23"/>
</dbReference>
<dbReference type="STRING" id="83332.Rv2585c"/>
<dbReference type="PaxDb" id="83332-Rv2585c"/>
<dbReference type="GeneID" id="887701"/>
<dbReference type="KEGG" id="mtu:Rv2585c"/>
<dbReference type="KEGG" id="mtv:RVBD_2585c"/>
<dbReference type="TubercuList" id="Rv2585c"/>
<dbReference type="eggNOG" id="COG0747">
    <property type="taxonomic scope" value="Bacteria"/>
</dbReference>
<dbReference type="InParanoid" id="P9WL77"/>
<dbReference type="OrthoDB" id="7888869at2"/>
<dbReference type="Proteomes" id="UP000001584">
    <property type="component" value="Chromosome"/>
</dbReference>
<dbReference type="GO" id="GO:0005829">
    <property type="term" value="C:cytosol"/>
    <property type="evidence" value="ECO:0007005"/>
    <property type="project" value="MTBBASE"/>
</dbReference>
<dbReference type="GO" id="GO:0005576">
    <property type="term" value="C:extracellular region"/>
    <property type="evidence" value="ECO:0007005"/>
    <property type="project" value="MTBBASE"/>
</dbReference>
<dbReference type="GO" id="GO:0005886">
    <property type="term" value="C:plasma membrane"/>
    <property type="evidence" value="ECO:0007669"/>
    <property type="project" value="UniProtKB-SubCell"/>
</dbReference>
<dbReference type="GO" id="GO:1904680">
    <property type="term" value="F:peptide transmembrane transporter activity"/>
    <property type="evidence" value="ECO:0000318"/>
    <property type="project" value="GO_Central"/>
</dbReference>
<dbReference type="GO" id="GO:0015833">
    <property type="term" value="P:peptide transport"/>
    <property type="evidence" value="ECO:0000318"/>
    <property type="project" value="GO_Central"/>
</dbReference>
<dbReference type="FunFam" id="3.90.76.10:FF:000016">
    <property type="entry name" value="Possible conserved lipoprotein"/>
    <property type="match status" value="1"/>
</dbReference>
<dbReference type="Gene3D" id="3.90.76.10">
    <property type="entry name" value="Dipeptide-binding Protein, Domain 1"/>
    <property type="match status" value="1"/>
</dbReference>
<dbReference type="Gene3D" id="3.10.105.10">
    <property type="entry name" value="Dipeptide-binding Protein, Domain 3"/>
    <property type="match status" value="1"/>
</dbReference>
<dbReference type="Gene3D" id="3.40.190.10">
    <property type="entry name" value="Periplasmic binding protein-like II"/>
    <property type="match status" value="1"/>
</dbReference>
<dbReference type="InterPro" id="IPR039424">
    <property type="entry name" value="SBP_5"/>
</dbReference>
<dbReference type="InterPro" id="IPR000914">
    <property type="entry name" value="SBP_5_dom"/>
</dbReference>
<dbReference type="PANTHER" id="PTHR30290:SF65">
    <property type="entry name" value="MONOACYL PHOSPHATIDYLINOSITOL TETRAMANNOSIDE-BINDING PROTEIN LPQW-RELATED"/>
    <property type="match status" value="1"/>
</dbReference>
<dbReference type="PANTHER" id="PTHR30290">
    <property type="entry name" value="PERIPLASMIC BINDING COMPONENT OF ABC TRANSPORTER"/>
    <property type="match status" value="1"/>
</dbReference>
<dbReference type="Pfam" id="PF00496">
    <property type="entry name" value="SBP_bac_5"/>
    <property type="match status" value="1"/>
</dbReference>
<dbReference type="SUPFAM" id="SSF53850">
    <property type="entry name" value="Periplasmic binding protein-like II"/>
    <property type="match status" value="1"/>
</dbReference>
<dbReference type="PROSITE" id="PS51257">
    <property type="entry name" value="PROKAR_LIPOPROTEIN"/>
    <property type="match status" value="1"/>
</dbReference>
<organism>
    <name type="scientific">Mycobacterium tuberculosis (strain ATCC 25618 / H37Rv)</name>
    <dbReference type="NCBI Taxonomy" id="83332"/>
    <lineage>
        <taxon>Bacteria</taxon>
        <taxon>Bacillati</taxon>
        <taxon>Actinomycetota</taxon>
        <taxon>Actinomycetes</taxon>
        <taxon>Mycobacteriales</taxon>
        <taxon>Mycobacteriaceae</taxon>
        <taxon>Mycobacterium</taxon>
        <taxon>Mycobacterium tuberculosis complex</taxon>
    </lineage>
</organism>
<protein>
    <recommendedName>
        <fullName>Uncharacterized lipoprotein Rv2585c</fullName>
    </recommendedName>
</protein>
<sequence>MAPRRRRHTRIAGLRVVGTATLVAATTLTACSGSAAAQIDYVVDGALVTYNTNTVIGAASAGAQAFARTLTGFGYHGPDGQVVADRDFGTVSVVEGSPLILDYQISDDAVYSDGRPVTCDDLVLAWAAQSGRFPGFDAATQAGYVDIANIECTAGQKKARVSFIPDRSVVDHSQLFTATSLMPSHVIADQLHIDVTAALLSNNVSAVEQIARLWNSTWDLKPGRSHDEVRSRFPSSGPYKIESVLDDGAVVLVANDRWWGTKAITKRITVWPQGADIQDRVNNRSVDVVDVAAGSSGSLVTPDSYQRTDYPSAGIEQLIFAPQGSLAQSRTRRALALCVPRDAIARDAGVPIANSRLSPATDDALTDADGAAEARQFGRVDPAAARDALGGTPLTVRIGYGRPNARLAATIGTIADACAPAGITVSDVTVDTPGPQALRDGKIDVLLASTGGATGSGSSGSCAMDAYDLHSGNGNNLSGYANAQIDGIISALAVSADPAERARLLAEAAPVLWDEMPTLPLYRQQRTLLMSTKMYAVSRNPTRWGAGWNMDRWALAR</sequence>
<name>Y2585_MYCTU</name>
<accession>P9WL77</accession>
<accession>L0TAB1</accession>
<accession>Q50636</accession>
<evidence type="ECO:0000255" key="1">
    <source>
        <dbReference type="PROSITE-ProRule" id="PRU00303"/>
    </source>
</evidence>
<evidence type="ECO:0000305" key="2"/>